<organism>
    <name type="scientific">Malus domestica</name>
    <name type="common">Apple</name>
    <name type="synonym">Pyrus malus</name>
    <dbReference type="NCBI Taxonomy" id="3750"/>
    <lineage>
        <taxon>Eukaryota</taxon>
        <taxon>Viridiplantae</taxon>
        <taxon>Streptophyta</taxon>
        <taxon>Embryophyta</taxon>
        <taxon>Tracheophyta</taxon>
        <taxon>Spermatophyta</taxon>
        <taxon>Magnoliopsida</taxon>
        <taxon>eudicotyledons</taxon>
        <taxon>Gunneridae</taxon>
        <taxon>Pentapetalae</taxon>
        <taxon>rosids</taxon>
        <taxon>fabids</taxon>
        <taxon>Rosales</taxon>
        <taxon>Rosaceae</taxon>
        <taxon>Amygdaloideae</taxon>
        <taxon>Maleae</taxon>
        <taxon>Malus</taxon>
    </lineage>
</organism>
<name>CAS1_MALDO</name>
<sequence>MAALRSFLKKRSSVLCNGAMRRKLFSTEVSQPLTDSPSFAQRIRNLPKDLPGTQIKTQVSQLIGRTPIVYLNKVTEGCGAYIAVKQEMFQPTASIKDRPALSMINDAEEKGLITPGETILIEPTSGNMGISMAFMAAMRGYKMVLTMPSYTSLERRVCMRCFGADLILTDPTKGMGGTVKKAYDLLESTPNAYMLQQFSNPANTKVHFETTGPEIWEDTNGQVDIFVMGIGSGGTVSGVGQYLKSKNPNVQIYGVEPAESNVLNGGKPGPHSIMGNGVGFKPDILDLDMLERVIEVTSEDAVNMARQLALKEGLMVGISSGANTVAAMELAKKPENKGKLIVTVHPSFGERYLSSVLFQELRQEAENMQPVAVDYP</sequence>
<proteinExistence type="evidence at protein level"/>
<comment type="function">
    <text evidence="3">Probably involved in the detoxification of cyanide that arises from ethylen biosynthesis in ripening fruits. Has only background level of in vitro cysteine synthase activity.</text>
</comment>
<comment type="catalytic activity">
    <reaction evidence="3">
        <text>hydrogen cyanide + L-cysteine = 3-cyano-L-alanine + hydrogen sulfide + H(+)</text>
        <dbReference type="Rhea" id="RHEA:17821"/>
        <dbReference type="ChEBI" id="CHEBI:15378"/>
        <dbReference type="ChEBI" id="CHEBI:18407"/>
        <dbReference type="ChEBI" id="CHEBI:29919"/>
        <dbReference type="ChEBI" id="CHEBI:35235"/>
        <dbReference type="ChEBI" id="CHEBI:77860"/>
        <dbReference type="EC" id="4.4.1.9"/>
    </reaction>
</comment>
<comment type="cofactor">
    <cofactor evidence="4">
        <name>pyridoxal 5'-phosphate</name>
        <dbReference type="ChEBI" id="CHEBI:597326"/>
    </cofactor>
</comment>
<comment type="subcellular location">
    <subcellularLocation>
        <location evidence="4">Mitochondrion</location>
    </subcellularLocation>
</comment>
<comment type="tissue specificity">
    <text evidence="3">Expressed in leaves, flowers and fruits.</text>
</comment>
<comment type="developmental stage">
    <text evidence="3">Up-regulated during the ripening process of fruits.</text>
</comment>
<comment type="induction">
    <text evidence="3">Up-regulated by ethylene treatment and wounding.</text>
</comment>
<comment type="similarity">
    <text evidence="4">Belongs to the cysteine synthase/cystathionine beta-synthase family.</text>
</comment>
<keyword id="KW-0028">Amino-acid biosynthesis</keyword>
<keyword id="KW-0198">Cysteine biosynthesis</keyword>
<keyword id="KW-0456">Lyase</keyword>
<keyword id="KW-0496">Mitochondrion</keyword>
<keyword id="KW-0663">Pyridoxal phosphate</keyword>
<keyword id="KW-0808">Transferase</keyword>
<keyword id="KW-0809">Transit peptide</keyword>
<dbReference type="EC" id="4.4.1.9"/>
<dbReference type="EMBL" id="DQ471308">
    <property type="protein sequence ID" value="ABF13209.1"/>
    <property type="molecule type" value="mRNA"/>
</dbReference>
<dbReference type="RefSeq" id="NP_001280949.1">
    <property type="nucleotide sequence ID" value="NM_001294020.1"/>
</dbReference>
<dbReference type="SMR" id="Q1KLZ2"/>
<dbReference type="GeneID" id="103401891"/>
<dbReference type="KEGG" id="mdm:103401891"/>
<dbReference type="OrthoDB" id="10259545at2759"/>
<dbReference type="BioCyc" id="MetaCyc:MONOMER-16250"/>
<dbReference type="BRENDA" id="4.4.1.9">
    <property type="organism ID" value="3164"/>
</dbReference>
<dbReference type="GO" id="GO:0005739">
    <property type="term" value="C:mitochondrion"/>
    <property type="evidence" value="ECO:0007669"/>
    <property type="project" value="UniProtKB-SubCell"/>
</dbReference>
<dbReference type="GO" id="GO:0004124">
    <property type="term" value="F:cysteine synthase activity"/>
    <property type="evidence" value="ECO:0007669"/>
    <property type="project" value="InterPro"/>
</dbReference>
<dbReference type="GO" id="GO:0050017">
    <property type="term" value="F:L-3-cyanoalanine synthase activity"/>
    <property type="evidence" value="ECO:0000314"/>
    <property type="project" value="UniProtKB"/>
</dbReference>
<dbReference type="GO" id="GO:0006535">
    <property type="term" value="P:cysteine biosynthetic process from serine"/>
    <property type="evidence" value="ECO:0007669"/>
    <property type="project" value="InterPro"/>
</dbReference>
<dbReference type="GO" id="GO:0009836">
    <property type="term" value="P:fruit ripening, climacteric"/>
    <property type="evidence" value="ECO:0000314"/>
    <property type="project" value="UniProtKB"/>
</dbReference>
<dbReference type="GO" id="GO:0009611">
    <property type="term" value="P:response to wounding"/>
    <property type="evidence" value="ECO:0000314"/>
    <property type="project" value="CACAO"/>
</dbReference>
<dbReference type="CDD" id="cd01561">
    <property type="entry name" value="CBS_like"/>
    <property type="match status" value="1"/>
</dbReference>
<dbReference type="FunFam" id="3.40.50.1100:FF:000006">
    <property type="entry name" value="Cysteine synthase"/>
    <property type="match status" value="1"/>
</dbReference>
<dbReference type="FunFam" id="3.40.50.1100:FF:000130">
    <property type="entry name" value="Cysteine synthase"/>
    <property type="match status" value="1"/>
</dbReference>
<dbReference type="Gene3D" id="3.40.50.1100">
    <property type="match status" value="2"/>
</dbReference>
<dbReference type="InterPro" id="IPR005856">
    <property type="entry name" value="Cys_synth"/>
</dbReference>
<dbReference type="InterPro" id="IPR050214">
    <property type="entry name" value="Cys_Synth/Cystath_Beta-Synth"/>
</dbReference>
<dbReference type="InterPro" id="IPR005859">
    <property type="entry name" value="CysK"/>
</dbReference>
<dbReference type="InterPro" id="IPR001216">
    <property type="entry name" value="P-phosphate_BS"/>
</dbReference>
<dbReference type="InterPro" id="IPR001926">
    <property type="entry name" value="TrpB-like_PALP"/>
</dbReference>
<dbReference type="InterPro" id="IPR036052">
    <property type="entry name" value="TrpB-like_PALP_sf"/>
</dbReference>
<dbReference type="NCBIfam" id="TIGR01139">
    <property type="entry name" value="cysK"/>
    <property type="match status" value="1"/>
</dbReference>
<dbReference type="NCBIfam" id="TIGR01136">
    <property type="entry name" value="cysKM"/>
    <property type="match status" value="1"/>
</dbReference>
<dbReference type="PANTHER" id="PTHR10314">
    <property type="entry name" value="CYSTATHIONINE BETA-SYNTHASE"/>
    <property type="match status" value="1"/>
</dbReference>
<dbReference type="Pfam" id="PF00291">
    <property type="entry name" value="PALP"/>
    <property type="match status" value="1"/>
</dbReference>
<dbReference type="SUPFAM" id="SSF53686">
    <property type="entry name" value="Tryptophan synthase beta subunit-like PLP-dependent enzymes"/>
    <property type="match status" value="1"/>
</dbReference>
<dbReference type="PROSITE" id="PS00901">
    <property type="entry name" value="CYS_SYNTHASE"/>
    <property type="match status" value="1"/>
</dbReference>
<feature type="transit peptide" description="Mitochondrion" evidence="2">
    <location>
        <begin position="1"/>
        <end position="14"/>
    </location>
</feature>
<feature type="chain" id="PRO_0000418639" description="L-3-cyanoalanine synthase 1, mitochondrial">
    <location>
        <begin position="15"/>
        <end position="376"/>
    </location>
</feature>
<feature type="binding site" evidence="1">
    <location>
        <position position="127"/>
    </location>
    <ligand>
        <name>pyridoxal 5'-phosphate</name>
        <dbReference type="ChEBI" id="CHEBI:597326"/>
    </ligand>
</feature>
<feature type="binding site" evidence="1">
    <location>
        <begin position="231"/>
        <end position="235"/>
    </location>
    <ligand>
        <name>pyridoxal 5'-phosphate</name>
        <dbReference type="ChEBI" id="CHEBI:597326"/>
    </ligand>
</feature>
<feature type="binding site" evidence="1">
    <location>
        <position position="319"/>
    </location>
    <ligand>
        <name>pyridoxal 5'-phosphate</name>
        <dbReference type="ChEBI" id="CHEBI:597326"/>
    </ligand>
</feature>
<feature type="modified residue" description="N6-(pyridoxal phosphate)lysine" evidence="1">
    <location>
        <position position="96"/>
    </location>
</feature>
<evidence type="ECO:0000250" key="1"/>
<evidence type="ECO:0000255" key="2"/>
<evidence type="ECO:0000269" key="3">
    <source>
    </source>
</evidence>
<evidence type="ECO:0000305" key="4"/>
<gene>
    <name type="primary">CAS1</name>
</gene>
<reference key="1">
    <citation type="journal article" date="2007" name="Plant Cell Rep.">
        <title>Expression of MdCAS1 and MdCAS2, encoding apple beta-cyanoalanine synthase homologs, is concomitantly induced during ripening and implicates MdCASs in the possible role of the cyanide detoxification in Fuji apple (Malus domestica Borkh.) fruits.</title>
        <authorList>
            <person name="Han S.E."/>
            <person name="Seo Y.S."/>
            <person name="Kim D."/>
            <person name="Sung S.K."/>
            <person name="Kim W.T."/>
        </authorList>
    </citation>
    <scope>NUCLEOTIDE SEQUENCE [MRNA]</scope>
    <scope>FUNCTION</scope>
    <scope>CATALYTIC ACTIVITY</scope>
    <scope>TISSUE SPECIFICITY</scope>
    <scope>DEVELOPMENTAL STAGE</scope>
    <scope>INDUCTION BY ETHYLENE AND WOUNDING</scope>
</reference>
<accession>Q1KLZ2</accession>
<protein>
    <recommendedName>
        <fullName>L-3-cyanoalanine synthase 1, mitochondrial</fullName>
        <shortName>MdCAS1</shortName>
        <ecNumber>4.4.1.9</ecNumber>
    </recommendedName>
</protein>